<name>CTRP_PENMO</name>
<organism>
    <name type="scientific">Penaeus monodon</name>
    <name type="common">Giant tiger prawn</name>
    <dbReference type="NCBI Taxonomy" id="6687"/>
    <lineage>
        <taxon>Eukaryota</taxon>
        <taxon>Metazoa</taxon>
        <taxon>Ecdysozoa</taxon>
        <taxon>Arthropoda</taxon>
        <taxon>Crustacea</taxon>
        <taxon>Multicrustacea</taxon>
        <taxon>Malacostraca</taxon>
        <taxon>Eumalacostraca</taxon>
        <taxon>Eucarida</taxon>
        <taxon>Decapoda</taxon>
        <taxon>Dendrobranchiata</taxon>
        <taxon>Penaeoidea</taxon>
        <taxon>Penaeidae</taxon>
        <taxon>Penaeus</taxon>
    </lineage>
</organism>
<keyword id="KW-0903">Direct protein sequencing</keyword>
<keyword id="KW-0378">Hydrolase</keyword>
<keyword id="KW-0645">Protease</keyword>
<keyword id="KW-0964">Secreted</keyword>
<keyword id="KW-0720">Serine protease</keyword>
<comment type="catalytic activity">
    <reaction evidence="2 3">
        <text>Preferential cleavage: Tyr-|-Xaa, Trp-|-Xaa, Phe-|-Xaa, Leu-|-Xaa.</text>
        <dbReference type="EC" id="3.4.21.1"/>
    </reaction>
</comment>
<comment type="subcellular location">
    <subcellularLocation>
        <location>Secreted</location>
        <location>Extracellular space</location>
    </subcellularLocation>
</comment>
<comment type="similarity">
    <text evidence="1">Belongs to the peptidase S1 family.</text>
</comment>
<accession>P35002</accession>
<reference key="1">
    <citation type="journal article" date="1991" name="Biochim. Biophys. Acta">
        <title>The midgut chymotrypsins of shrimps (Penaeus monodon, Penaeus japonicus and Penaeus penicillatus).</title>
        <authorList>
            <person name="Tsai I.H."/>
            <person name="Lu P.J."/>
            <person name="Chuang J.L."/>
        </authorList>
    </citation>
    <scope>PROTEIN SEQUENCE</scope>
    <source>
        <tissue>Midgut</tissue>
    </source>
</reference>
<proteinExistence type="evidence at protein level"/>
<feature type="chain" id="PRO_0000088675" description="Chymotrypsin">
    <location>
        <begin position="1"/>
        <end position="31" status="greater than"/>
    </location>
</feature>
<feature type="domain" description="Peptidase S1" evidence="1">
    <location>
        <begin position="1"/>
        <end position="31" status="greater than"/>
    </location>
</feature>
<feature type="non-terminal residue">
    <location>
        <position position="31"/>
    </location>
</feature>
<sequence length="31" mass="3287">IVGGVEAVPGVWPYQAALFIIDMYFCGGSLI</sequence>
<evidence type="ECO:0000255" key="1">
    <source>
        <dbReference type="PROSITE-ProRule" id="PRU00274"/>
    </source>
</evidence>
<evidence type="ECO:0000255" key="2">
    <source>
        <dbReference type="PROSITE-ProRule" id="PRU10078"/>
    </source>
</evidence>
<evidence type="ECO:0000255" key="3">
    <source>
        <dbReference type="PROSITE-ProRule" id="PRU10079"/>
    </source>
</evidence>
<dbReference type="EC" id="3.4.21.1"/>
<dbReference type="PIR" id="S18356">
    <property type="entry name" value="S18356"/>
</dbReference>
<dbReference type="SMR" id="P35002"/>
<dbReference type="MEROPS" id="S01.122"/>
<dbReference type="GO" id="GO:0005576">
    <property type="term" value="C:extracellular region"/>
    <property type="evidence" value="ECO:0007669"/>
    <property type="project" value="UniProtKB-SubCell"/>
</dbReference>
<dbReference type="GO" id="GO:0004252">
    <property type="term" value="F:serine-type endopeptidase activity"/>
    <property type="evidence" value="ECO:0007669"/>
    <property type="project" value="UniProtKB-EC"/>
</dbReference>
<dbReference type="GO" id="GO:0006508">
    <property type="term" value="P:proteolysis"/>
    <property type="evidence" value="ECO:0007669"/>
    <property type="project" value="UniProtKB-KW"/>
</dbReference>
<dbReference type="Gene3D" id="2.40.10.10">
    <property type="entry name" value="Trypsin-like serine proteases"/>
    <property type="match status" value="1"/>
</dbReference>
<dbReference type="InterPro" id="IPR009003">
    <property type="entry name" value="Peptidase_S1_PA"/>
</dbReference>
<dbReference type="InterPro" id="IPR043504">
    <property type="entry name" value="Peptidase_S1_PA_chymotrypsin"/>
</dbReference>
<dbReference type="InterPro" id="IPR001254">
    <property type="entry name" value="Trypsin_dom"/>
</dbReference>
<dbReference type="Pfam" id="PF00089">
    <property type="entry name" value="Trypsin"/>
    <property type="match status" value="1"/>
</dbReference>
<dbReference type="SUPFAM" id="SSF50494">
    <property type="entry name" value="Trypsin-like serine proteases"/>
    <property type="match status" value="1"/>
</dbReference>
<protein>
    <recommendedName>
        <fullName>Chymotrypsin</fullName>
        <ecNumber>3.4.21.1</ecNumber>
    </recommendedName>
</protein>